<proteinExistence type="inferred from homology"/>
<reference key="1">
    <citation type="journal article" date="2009" name="Genome Biol.">
        <title>Genomic and genetic analyses of diversity and plant interactions of Pseudomonas fluorescens.</title>
        <authorList>
            <person name="Silby M.W."/>
            <person name="Cerdeno-Tarraga A.M."/>
            <person name="Vernikos G.S."/>
            <person name="Giddens S.R."/>
            <person name="Jackson R.W."/>
            <person name="Preston G.M."/>
            <person name="Zhang X.-X."/>
            <person name="Moon C.D."/>
            <person name="Gehrig S.M."/>
            <person name="Godfrey S.A.C."/>
            <person name="Knight C.G."/>
            <person name="Malone J.G."/>
            <person name="Robinson Z."/>
            <person name="Spiers A.J."/>
            <person name="Harris S."/>
            <person name="Challis G.L."/>
            <person name="Yaxley A.M."/>
            <person name="Harris D."/>
            <person name="Seeger K."/>
            <person name="Murphy L."/>
            <person name="Rutter S."/>
            <person name="Squares R."/>
            <person name="Quail M.A."/>
            <person name="Saunders E."/>
            <person name="Mavromatis K."/>
            <person name="Brettin T.S."/>
            <person name="Bentley S.D."/>
            <person name="Hothersall J."/>
            <person name="Stephens E."/>
            <person name="Thomas C.M."/>
            <person name="Parkhill J."/>
            <person name="Levy S.B."/>
            <person name="Rainey P.B."/>
            <person name="Thomson N.R."/>
        </authorList>
    </citation>
    <scope>NUCLEOTIDE SEQUENCE [LARGE SCALE GENOMIC DNA]</scope>
    <source>
        <strain>Pf0-1</strain>
    </source>
</reference>
<keyword id="KW-0119">Carbohydrate metabolism</keyword>
<keyword id="KW-0378">Hydrolase</keyword>
<keyword id="KW-0460">Magnesium</keyword>
<keyword id="KW-0479">Metal-binding</keyword>
<protein>
    <recommendedName>
        <fullName evidence="1">Phosphoglycolate phosphatase</fullName>
        <shortName evidence="1">PGP</shortName>
        <shortName evidence="1">PGPase</shortName>
        <ecNumber evidence="1">3.1.3.18</ecNumber>
    </recommendedName>
</protein>
<feature type="chain" id="PRO_0000238167" description="Phosphoglycolate phosphatase">
    <location>
        <begin position="1"/>
        <end position="272"/>
    </location>
</feature>
<feature type="active site" description="Nucleophile" evidence="1">
    <location>
        <position position="19"/>
    </location>
</feature>
<feature type="binding site" evidence="1">
    <location>
        <position position="19"/>
    </location>
    <ligand>
        <name>Mg(2+)</name>
        <dbReference type="ChEBI" id="CHEBI:18420"/>
    </ligand>
</feature>
<feature type="binding site" evidence="1">
    <location>
        <position position="21"/>
    </location>
    <ligand>
        <name>Mg(2+)</name>
        <dbReference type="ChEBI" id="CHEBI:18420"/>
    </ligand>
</feature>
<feature type="binding site" evidence="1">
    <location>
        <position position="182"/>
    </location>
    <ligand>
        <name>Mg(2+)</name>
        <dbReference type="ChEBI" id="CHEBI:18420"/>
    </ligand>
</feature>
<organism>
    <name type="scientific">Pseudomonas fluorescens (strain Pf0-1)</name>
    <dbReference type="NCBI Taxonomy" id="205922"/>
    <lineage>
        <taxon>Bacteria</taxon>
        <taxon>Pseudomonadati</taxon>
        <taxon>Pseudomonadota</taxon>
        <taxon>Gammaproteobacteria</taxon>
        <taxon>Pseudomonadales</taxon>
        <taxon>Pseudomonadaceae</taxon>
        <taxon>Pseudomonas</taxon>
    </lineage>
</organism>
<name>GPH_PSEPF</name>
<sequence>MSGFEQLFPGQLPRLVMFDLDGTLIDSVPDLAAAVDNMLLSLGRKPAGIESVREWVGNGAPVLVRRALAGGIDHSSVDDVEAEHALEVFMEAYGASHELTVVYPGVRDTLKWLHKQGVAMALITNKPERFVAPLLDQMKIGRYFKWIIGGDTLPQKKPDPAALFFVMKMSGIPASQSLFVGDSRSDVLAAKAAGVKCVGLSYGYNHGRPIAEESPTLVIDDLRKLIPGCLDTAAEITLPDAAQSPSGNAIVVVTRKLWMKVIKALARWRWRA</sequence>
<gene>
    <name type="ordered locus">Pfl01_5119</name>
</gene>
<accession>Q3K5U8</accession>
<dbReference type="EC" id="3.1.3.18" evidence="1"/>
<dbReference type="EMBL" id="CP000094">
    <property type="protein sequence ID" value="ABA76856.1"/>
    <property type="molecule type" value="Genomic_DNA"/>
</dbReference>
<dbReference type="RefSeq" id="WP_011336196.1">
    <property type="nucleotide sequence ID" value="NC_007492.2"/>
</dbReference>
<dbReference type="SMR" id="Q3K5U8"/>
<dbReference type="KEGG" id="pfo:Pfl01_5119"/>
<dbReference type="eggNOG" id="COG0546">
    <property type="taxonomic scope" value="Bacteria"/>
</dbReference>
<dbReference type="HOGENOM" id="CLU_045011_19_1_6"/>
<dbReference type="UniPathway" id="UPA00865">
    <property type="reaction ID" value="UER00834"/>
</dbReference>
<dbReference type="Proteomes" id="UP000002704">
    <property type="component" value="Chromosome"/>
</dbReference>
<dbReference type="GO" id="GO:0005829">
    <property type="term" value="C:cytosol"/>
    <property type="evidence" value="ECO:0007669"/>
    <property type="project" value="TreeGrafter"/>
</dbReference>
<dbReference type="GO" id="GO:0046872">
    <property type="term" value="F:metal ion binding"/>
    <property type="evidence" value="ECO:0007669"/>
    <property type="project" value="UniProtKB-KW"/>
</dbReference>
<dbReference type="GO" id="GO:0008967">
    <property type="term" value="F:phosphoglycolate phosphatase activity"/>
    <property type="evidence" value="ECO:0007669"/>
    <property type="project" value="UniProtKB-UniRule"/>
</dbReference>
<dbReference type="GO" id="GO:0005975">
    <property type="term" value="P:carbohydrate metabolic process"/>
    <property type="evidence" value="ECO:0007669"/>
    <property type="project" value="InterPro"/>
</dbReference>
<dbReference type="GO" id="GO:0006281">
    <property type="term" value="P:DNA repair"/>
    <property type="evidence" value="ECO:0007669"/>
    <property type="project" value="TreeGrafter"/>
</dbReference>
<dbReference type="GO" id="GO:0046295">
    <property type="term" value="P:glycolate biosynthetic process"/>
    <property type="evidence" value="ECO:0007669"/>
    <property type="project" value="UniProtKB-UniRule"/>
</dbReference>
<dbReference type="CDD" id="cd16417">
    <property type="entry name" value="HAD_PGPase"/>
    <property type="match status" value="1"/>
</dbReference>
<dbReference type="FunFam" id="3.40.50.1000:FF:000022">
    <property type="entry name" value="Phosphoglycolate phosphatase"/>
    <property type="match status" value="1"/>
</dbReference>
<dbReference type="Gene3D" id="3.40.50.1000">
    <property type="entry name" value="HAD superfamily/HAD-like"/>
    <property type="match status" value="1"/>
</dbReference>
<dbReference type="Gene3D" id="1.10.150.240">
    <property type="entry name" value="Putative phosphatase, domain 2"/>
    <property type="match status" value="1"/>
</dbReference>
<dbReference type="HAMAP" id="MF_00495">
    <property type="entry name" value="GPH_hydrolase_bact"/>
    <property type="match status" value="1"/>
</dbReference>
<dbReference type="InterPro" id="IPR050155">
    <property type="entry name" value="HAD-like_hydrolase_sf"/>
</dbReference>
<dbReference type="InterPro" id="IPR036412">
    <property type="entry name" value="HAD-like_sf"/>
</dbReference>
<dbReference type="InterPro" id="IPR006439">
    <property type="entry name" value="HAD-SF_hydro_IA"/>
</dbReference>
<dbReference type="InterPro" id="IPR041492">
    <property type="entry name" value="HAD_2"/>
</dbReference>
<dbReference type="InterPro" id="IPR023214">
    <property type="entry name" value="HAD_sf"/>
</dbReference>
<dbReference type="InterPro" id="IPR023198">
    <property type="entry name" value="PGP-like_dom2"/>
</dbReference>
<dbReference type="InterPro" id="IPR037512">
    <property type="entry name" value="PGPase_prok"/>
</dbReference>
<dbReference type="NCBIfam" id="TIGR01549">
    <property type="entry name" value="HAD-SF-IA-v1"/>
    <property type="match status" value="1"/>
</dbReference>
<dbReference type="NCBIfam" id="TIGR01509">
    <property type="entry name" value="HAD-SF-IA-v3"/>
    <property type="match status" value="1"/>
</dbReference>
<dbReference type="NCBIfam" id="TIGR01449">
    <property type="entry name" value="PGP_bact"/>
    <property type="match status" value="1"/>
</dbReference>
<dbReference type="NCBIfam" id="NF009695">
    <property type="entry name" value="PRK13222.1-2"/>
    <property type="match status" value="1"/>
</dbReference>
<dbReference type="NCBIfam" id="NF009698">
    <property type="entry name" value="PRK13223.1"/>
    <property type="match status" value="1"/>
</dbReference>
<dbReference type="PANTHER" id="PTHR43434">
    <property type="entry name" value="PHOSPHOGLYCOLATE PHOSPHATASE"/>
    <property type="match status" value="1"/>
</dbReference>
<dbReference type="PANTHER" id="PTHR43434:SF1">
    <property type="entry name" value="PHOSPHOGLYCOLATE PHOSPHATASE"/>
    <property type="match status" value="1"/>
</dbReference>
<dbReference type="Pfam" id="PF13419">
    <property type="entry name" value="HAD_2"/>
    <property type="match status" value="1"/>
</dbReference>
<dbReference type="PRINTS" id="PR00413">
    <property type="entry name" value="HADHALOGNASE"/>
</dbReference>
<dbReference type="SFLD" id="SFLDG01135">
    <property type="entry name" value="C1.5.6:_HAD__Beta-PGM__Phospha"/>
    <property type="match status" value="1"/>
</dbReference>
<dbReference type="SFLD" id="SFLDG01129">
    <property type="entry name" value="C1.5:_HAD__Beta-PGM__Phosphata"/>
    <property type="match status" value="1"/>
</dbReference>
<dbReference type="SUPFAM" id="SSF56784">
    <property type="entry name" value="HAD-like"/>
    <property type="match status" value="1"/>
</dbReference>
<evidence type="ECO:0000255" key="1">
    <source>
        <dbReference type="HAMAP-Rule" id="MF_00495"/>
    </source>
</evidence>
<comment type="function">
    <text evidence="1">Specifically catalyzes the dephosphorylation of 2-phosphoglycolate. Is involved in the dissimilation of the intracellular 2-phosphoglycolate formed during the DNA repair of 3'-phosphoglycolate ends, a major class of DNA lesions induced by oxidative stress.</text>
</comment>
<comment type="catalytic activity">
    <reaction evidence="1">
        <text>2-phosphoglycolate + H2O = glycolate + phosphate</text>
        <dbReference type="Rhea" id="RHEA:14369"/>
        <dbReference type="ChEBI" id="CHEBI:15377"/>
        <dbReference type="ChEBI" id="CHEBI:29805"/>
        <dbReference type="ChEBI" id="CHEBI:43474"/>
        <dbReference type="ChEBI" id="CHEBI:58033"/>
        <dbReference type="EC" id="3.1.3.18"/>
    </reaction>
</comment>
<comment type="cofactor">
    <cofactor evidence="1">
        <name>Mg(2+)</name>
        <dbReference type="ChEBI" id="CHEBI:18420"/>
    </cofactor>
</comment>
<comment type="pathway">
    <text evidence="1">Organic acid metabolism; glycolate biosynthesis; glycolate from 2-phosphoglycolate: step 1/1.</text>
</comment>
<comment type="similarity">
    <text evidence="1">Belongs to the HAD-like hydrolase superfamily. CbbY/CbbZ/Gph/YieH family.</text>
</comment>